<organism>
    <name type="scientific">Salinibacter ruber (strain DSM 13855 / M31)</name>
    <dbReference type="NCBI Taxonomy" id="309807"/>
    <lineage>
        <taxon>Bacteria</taxon>
        <taxon>Pseudomonadati</taxon>
        <taxon>Rhodothermota</taxon>
        <taxon>Rhodothermia</taxon>
        <taxon>Rhodothermales</taxon>
        <taxon>Salinibacteraceae</taxon>
        <taxon>Salinibacter</taxon>
    </lineage>
</organism>
<keyword id="KW-0963">Cytoplasm</keyword>
<keyword id="KW-0210">Decarboxylase</keyword>
<keyword id="KW-0456">Lyase</keyword>
<keyword id="KW-0627">Porphyrin biosynthesis</keyword>
<keyword id="KW-1185">Reference proteome</keyword>
<proteinExistence type="inferred from homology"/>
<accession>Q2S1W0</accession>
<sequence>MASFPSLDNDRLLRTARGEPTDCTPVWMMRQAGRYLPEYQAIRKEHSFFEVVETPELAAEVTIQPVERFSLDAAILFCDIMVVPEAMGLTVKMVSGQGPTFPKPLTTPDEMERLVEPDVESALGHVFEALTVTRHELAGRVPLIGFSGAPWTLMAYMVEGGGSKSYRAARRWLYRHPDASKALLQRTTDVIVEYLIRQVDAGAQMLQVFDSWAGLHTPENFRTFCLPYLAEIATRVKAAHPDVPLVIFAKGAHYALDALADTDYDVISLDSTMDPDAARDTVGDRAVLQGNLDPCALYAPPDVLRREVQHMLAGFGPHHHIGNLGHGMLPDHDPEHARVFVDAVHEHSRHMRTV</sequence>
<protein>
    <recommendedName>
        <fullName evidence="1">Uroporphyrinogen decarboxylase</fullName>
        <shortName evidence="1">UPD</shortName>
        <shortName evidence="1">URO-D</shortName>
        <ecNumber evidence="1">4.1.1.37</ecNumber>
    </recommendedName>
</protein>
<name>DCUP_SALRD</name>
<gene>
    <name evidence="1" type="primary">hemE</name>
    <name type="ordered locus">SRU_1702</name>
</gene>
<evidence type="ECO:0000255" key="1">
    <source>
        <dbReference type="HAMAP-Rule" id="MF_00218"/>
    </source>
</evidence>
<feature type="chain" id="PRO_0000325692" description="Uroporphyrinogen decarboxylase">
    <location>
        <begin position="1"/>
        <end position="354"/>
    </location>
</feature>
<feature type="binding site" evidence="1">
    <location>
        <begin position="30"/>
        <end position="34"/>
    </location>
    <ligand>
        <name>substrate</name>
    </ligand>
</feature>
<feature type="binding site" evidence="1">
    <location>
        <position position="49"/>
    </location>
    <ligand>
        <name>substrate</name>
    </ligand>
</feature>
<feature type="binding site" evidence="1">
    <location>
        <position position="79"/>
    </location>
    <ligand>
        <name>substrate</name>
    </ligand>
</feature>
<feature type="binding site" evidence="1">
    <location>
        <position position="156"/>
    </location>
    <ligand>
        <name>substrate</name>
    </ligand>
</feature>
<feature type="binding site" evidence="1">
    <location>
        <position position="211"/>
    </location>
    <ligand>
        <name>substrate</name>
    </ligand>
</feature>
<feature type="binding site" evidence="1">
    <location>
        <position position="326"/>
    </location>
    <ligand>
        <name>substrate</name>
    </ligand>
</feature>
<feature type="site" description="Transition state stabilizer" evidence="1">
    <location>
        <position position="79"/>
    </location>
</feature>
<comment type="function">
    <text evidence="1">Catalyzes the decarboxylation of four acetate groups of uroporphyrinogen-III to yield coproporphyrinogen-III.</text>
</comment>
<comment type="catalytic activity">
    <reaction evidence="1">
        <text>uroporphyrinogen III + 4 H(+) = coproporphyrinogen III + 4 CO2</text>
        <dbReference type="Rhea" id="RHEA:19865"/>
        <dbReference type="ChEBI" id="CHEBI:15378"/>
        <dbReference type="ChEBI" id="CHEBI:16526"/>
        <dbReference type="ChEBI" id="CHEBI:57308"/>
        <dbReference type="ChEBI" id="CHEBI:57309"/>
        <dbReference type="EC" id="4.1.1.37"/>
    </reaction>
</comment>
<comment type="pathway">
    <text evidence="1">Porphyrin-containing compound metabolism; protoporphyrin-IX biosynthesis; coproporphyrinogen-III from 5-aminolevulinate: step 4/4.</text>
</comment>
<comment type="subunit">
    <text evidence="1">Homodimer.</text>
</comment>
<comment type="subcellular location">
    <subcellularLocation>
        <location evidence="1">Cytoplasm</location>
    </subcellularLocation>
</comment>
<comment type="similarity">
    <text evidence="1">Belongs to the uroporphyrinogen decarboxylase family.</text>
</comment>
<reference key="1">
    <citation type="journal article" date="2005" name="Proc. Natl. Acad. Sci. U.S.A.">
        <title>The genome of Salinibacter ruber: convergence and gene exchange among hyperhalophilic bacteria and archaea.</title>
        <authorList>
            <person name="Mongodin E.F."/>
            <person name="Nelson K.E."/>
            <person name="Daugherty S."/>
            <person name="DeBoy R.T."/>
            <person name="Wister J."/>
            <person name="Khouri H."/>
            <person name="Weidman J."/>
            <person name="Walsh D.A."/>
            <person name="Papke R.T."/>
            <person name="Sanchez Perez G."/>
            <person name="Sharma A.K."/>
            <person name="Nesbo C.L."/>
            <person name="MacLeod D."/>
            <person name="Bapteste E."/>
            <person name="Doolittle W.F."/>
            <person name="Charlebois R.L."/>
            <person name="Legault B."/>
            <person name="Rodriguez-Valera F."/>
        </authorList>
    </citation>
    <scope>NUCLEOTIDE SEQUENCE [LARGE SCALE GENOMIC DNA]</scope>
    <source>
        <strain>DSM 13855 / CECT 5946 / M31</strain>
    </source>
</reference>
<dbReference type="EC" id="4.1.1.37" evidence="1"/>
<dbReference type="EMBL" id="CP000159">
    <property type="protein sequence ID" value="ABC44800.1"/>
    <property type="molecule type" value="Genomic_DNA"/>
</dbReference>
<dbReference type="RefSeq" id="WP_011404447.1">
    <property type="nucleotide sequence ID" value="NC_007677.1"/>
</dbReference>
<dbReference type="RefSeq" id="YP_445821.1">
    <property type="nucleotide sequence ID" value="NC_007677.1"/>
</dbReference>
<dbReference type="SMR" id="Q2S1W0"/>
<dbReference type="STRING" id="309807.SRU_1702"/>
<dbReference type="EnsemblBacteria" id="ABC44800">
    <property type="protein sequence ID" value="ABC44800"/>
    <property type="gene ID" value="SRU_1702"/>
</dbReference>
<dbReference type="GeneID" id="83728623"/>
<dbReference type="KEGG" id="sru:SRU_1702"/>
<dbReference type="PATRIC" id="fig|309807.25.peg.1766"/>
<dbReference type="eggNOG" id="COG0407">
    <property type="taxonomic scope" value="Bacteria"/>
</dbReference>
<dbReference type="HOGENOM" id="CLU_040933_0_0_10"/>
<dbReference type="OrthoDB" id="9806656at2"/>
<dbReference type="UniPathway" id="UPA00251">
    <property type="reaction ID" value="UER00321"/>
</dbReference>
<dbReference type="Proteomes" id="UP000008674">
    <property type="component" value="Chromosome"/>
</dbReference>
<dbReference type="GO" id="GO:0005829">
    <property type="term" value="C:cytosol"/>
    <property type="evidence" value="ECO:0007669"/>
    <property type="project" value="TreeGrafter"/>
</dbReference>
<dbReference type="GO" id="GO:0004853">
    <property type="term" value="F:uroporphyrinogen decarboxylase activity"/>
    <property type="evidence" value="ECO:0007669"/>
    <property type="project" value="UniProtKB-UniRule"/>
</dbReference>
<dbReference type="GO" id="GO:0006782">
    <property type="term" value="P:protoporphyrinogen IX biosynthetic process"/>
    <property type="evidence" value="ECO:0007669"/>
    <property type="project" value="UniProtKB-UniRule"/>
</dbReference>
<dbReference type="CDD" id="cd00717">
    <property type="entry name" value="URO-D"/>
    <property type="match status" value="1"/>
</dbReference>
<dbReference type="FunFam" id="3.20.20.210:FF:000001">
    <property type="entry name" value="Uroporphyrinogen decarboxylase"/>
    <property type="match status" value="1"/>
</dbReference>
<dbReference type="Gene3D" id="3.20.20.210">
    <property type="match status" value="1"/>
</dbReference>
<dbReference type="HAMAP" id="MF_00218">
    <property type="entry name" value="URO_D"/>
    <property type="match status" value="1"/>
</dbReference>
<dbReference type="InterPro" id="IPR038071">
    <property type="entry name" value="UROD/MetE-like_sf"/>
</dbReference>
<dbReference type="InterPro" id="IPR006361">
    <property type="entry name" value="Uroporphyrinogen_deCO2ase_HemE"/>
</dbReference>
<dbReference type="InterPro" id="IPR000257">
    <property type="entry name" value="Uroporphyrinogen_deCOase"/>
</dbReference>
<dbReference type="NCBIfam" id="TIGR01464">
    <property type="entry name" value="hemE"/>
    <property type="match status" value="1"/>
</dbReference>
<dbReference type="PANTHER" id="PTHR21091">
    <property type="entry name" value="METHYLTETRAHYDROFOLATE:HOMOCYSTEINE METHYLTRANSFERASE RELATED"/>
    <property type="match status" value="1"/>
</dbReference>
<dbReference type="PANTHER" id="PTHR21091:SF169">
    <property type="entry name" value="UROPORPHYRINOGEN DECARBOXYLASE"/>
    <property type="match status" value="1"/>
</dbReference>
<dbReference type="Pfam" id="PF01208">
    <property type="entry name" value="URO-D"/>
    <property type="match status" value="1"/>
</dbReference>
<dbReference type="SUPFAM" id="SSF51726">
    <property type="entry name" value="UROD/MetE-like"/>
    <property type="match status" value="1"/>
</dbReference>
<dbReference type="PROSITE" id="PS00906">
    <property type="entry name" value="UROD_1"/>
    <property type="match status" value="1"/>
</dbReference>
<dbReference type="PROSITE" id="PS00907">
    <property type="entry name" value="UROD_2"/>
    <property type="match status" value="1"/>
</dbReference>